<sequence>MSKFSSKNINKTKVPESPVVLAILDGWGHREENLDNAIKNANTPIMDSLWHAYPHTLINASGADVGLPNGQMGNSEVGHLTIGSGRIIQQELVRITNVVKNNQLTQVNELKEMANSIKKKKGTLHITGLCSDGGVHSHIDHLLGLIKWASEEHIEKVAIHIITDGRDTPAKSAYKYIRQIEDCIKKFKVGEIASICGRYWIMDRNLIWERTEKAFVNLTDPNGKKIDISPADYLNKSYNANITDEFLEPIRISKDFLKDEDSLICFNFRPDRARQIIKALSEKEFDNFKRKSIPDVDILTFTQYEANLPVKIAFPPESLNNFIGQIVSENGLKQYRTAETEKYPHVTYFFNGGVEVPSPGEQRHLIPSPRVATYDMAPEMSAEELTISCSNAIKTGQYSFVVINFANPDMVGHTGNMAAAIKAIETVDRCIGKIVNATGEMGGSILITADHGNAELMKGPDGEPWTAHTINKVPLIFIEGEKRKIPNMGNEIYLRENAGLADIAPTLLQLLNLPIPKEMTGKSLIKEIELKGFNKVVQHV</sequence>
<name>GPMI_PROMP</name>
<gene>
    <name evidence="1" type="primary">gpmI</name>
    <name type="synonym">pgmI</name>
    <name type="ordered locus">PMM1434</name>
</gene>
<organism>
    <name type="scientific">Prochlorococcus marinus subsp. pastoris (strain CCMP1986 / NIES-2087 / MED4)</name>
    <dbReference type="NCBI Taxonomy" id="59919"/>
    <lineage>
        <taxon>Bacteria</taxon>
        <taxon>Bacillati</taxon>
        <taxon>Cyanobacteriota</taxon>
        <taxon>Cyanophyceae</taxon>
        <taxon>Synechococcales</taxon>
        <taxon>Prochlorococcaceae</taxon>
        <taxon>Prochlorococcus</taxon>
    </lineage>
</organism>
<proteinExistence type="inferred from homology"/>
<comment type="function">
    <text evidence="1">Catalyzes the interconversion of 2-phosphoglycerate and 3-phosphoglycerate.</text>
</comment>
<comment type="catalytic activity">
    <reaction evidence="1">
        <text>(2R)-2-phosphoglycerate = (2R)-3-phosphoglycerate</text>
        <dbReference type="Rhea" id="RHEA:15901"/>
        <dbReference type="ChEBI" id="CHEBI:58272"/>
        <dbReference type="ChEBI" id="CHEBI:58289"/>
        <dbReference type="EC" id="5.4.2.12"/>
    </reaction>
</comment>
<comment type="cofactor">
    <cofactor evidence="1">
        <name>Mn(2+)</name>
        <dbReference type="ChEBI" id="CHEBI:29035"/>
    </cofactor>
    <text evidence="1">Binds 2 manganese ions per subunit.</text>
</comment>
<comment type="pathway">
    <text evidence="1">Carbohydrate degradation; glycolysis; pyruvate from D-glyceraldehyde 3-phosphate: step 3/5.</text>
</comment>
<comment type="subunit">
    <text evidence="1">Monomer.</text>
</comment>
<comment type="similarity">
    <text evidence="1">Belongs to the BPG-independent phosphoglycerate mutase family.</text>
</comment>
<feature type="chain" id="PRO_0000212186" description="2,3-bisphosphoglycerate-independent phosphoglycerate mutase">
    <location>
        <begin position="1"/>
        <end position="540"/>
    </location>
</feature>
<feature type="active site" description="Phosphoserine intermediate" evidence="1">
    <location>
        <position position="75"/>
    </location>
</feature>
<feature type="binding site" evidence="1">
    <location>
        <position position="25"/>
    </location>
    <ligand>
        <name>Mn(2+)</name>
        <dbReference type="ChEBI" id="CHEBI:29035"/>
        <label>2</label>
    </ligand>
</feature>
<feature type="binding site" evidence="1">
    <location>
        <position position="75"/>
    </location>
    <ligand>
        <name>Mn(2+)</name>
        <dbReference type="ChEBI" id="CHEBI:29035"/>
        <label>2</label>
    </ligand>
</feature>
<feature type="binding site" evidence="1">
    <location>
        <position position="136"/>
    </location>
    <ligand>
        <name>substrate</name>
    </ligand>
</feature>
<feature type="binding site" evidence="1">
    <location>
        <begin position="166"/>
        <end position="167"/>
    </location>
    <ligand>
        <name>substrate</name>
    </ligand>
</feature>
<feature type="binding site" evidence="1">
    <location>
        <position position="198"/>
    </location>
    <ligand>
        <name>substrate</name>
    </ligand>
</feature>
<feature type="binding site" evidence="1">
    <location>
        <position position="204"/>
    </location>
    <ligand>
        <name>substrate</name>
    </ligand>
</feature>
<feature type="binding site" evidence="1">
    <location>
        <begin position="269"/>
        <end position="272"/>
    </location>
    <ligand>
        <name>substrate</name>
    </ligand>
</feature>
<feature type="binding site" evidence="1">
    <location>
        <position position="342"/>
    </location>
    <ligand>
        <name>substrate</name>
    </ligand>
</feature>
<feature type="binding site" evidence="1">
    <location>
        <position position="409"/>
    </location>
    <ligand>
        <name>Mn(2+)</name>
        <dbReference type="ChEBI" id="CHEBI:29035"/>
        <label>1</label>
    </ligand>
</feature>
<feature type="binding site" evidence="1">
    <location>
        <position position="413"/>
    </location>
    <ligand>
        <name>Mn(2+)</name>
        <dbReference type="ChEBI" id="CHEBI:29035"/>
        <label>1</label>
    </ligand>
</feature>
<feature type="binding site" evidence="1">
    <location>
        <position position="450"/>
    </location>
    <ligand>
        <name>Mn(2+)</name>
        <dbReference type="ChEBI" id="CHEBI:29035"/>
        <label>2</label>
    </ligand>
</feature>
<feature type="binding site" evidence="1">
    <location>
        <position position="451"/>
    </location>
    <ligand>
        <name>Mn(2+)</name>
        <dbReference type="ChEBI" id="CHEBI:29035"/>
        <label>2</label>
    </ligand>
</feature>
<feature type="binding site" evidence="1">
    <location>
        <position position="468"/>
    </location>
    <ligand>
        <name>Mn(2+)</name>
        <dbReference type="ChEBI" id="CHEBI:29035"/>
        <label>1</label>
    </ligand>
</feature>
<dbReference type="EC" id="5.4.2.12" evidence="1"/>
<dbReference type="EMBL" id="BX548174">
    <property type="protein sequence ID" value="CAE19893.1"/>
    <property type="molecule type" value="Genomic_DNA"/>
</dbReference>
<dbReference type="RefSeq" id="WP_011133063.1">
    <property type="nucleotide sequence ID" value="NC_005072.1"/>
</dbReference>
<dbReference type="SMR" id="Q7V051"/>
<dbReference type="STRING" id="59919.PMM1434"/>
<dbReference type="KEGG" id="pmm:PMM1434"/>
<dbReference type="eggNOG" id="COG0696">
    <property type="taxonomic scope" value="Bacteria"/>
</dbReference>
<dbReference type="HOGENOM" id="CLU_026099_2_0_3"/>
<dbReference type="OrthoDB" id="9800863at2"/>
<dbReference type="UniPathway" id="UPA00109">
    <property type="reaction ID" value="UER00186"/>
</dbReference>
<dbReference type="Proteomes" id="UP000001026">
    <property type="component" value="Chromosome"/>
</dbReference>
<dbReference type="GO" id="GO:0005829">
    <property type="term" value="C:cytosol"/>
    <property type="evidence" value="ECO:0007669"/>
    <property type="project" value="TreeGrafter"/>
</dbReference>
<dbReference type="GO" id="GO:0030145">
    <property type="term" value="F:manganese ion binding"/>
    <property type="evidence" value="ECO:0007669"/>
    <property type="project" value="UniProtKB-UniRule"/>
</dbReference>
<dbReference type="GO" id="GO:0004619">
    <property type="term" value="F:phosphoglycerate mutase activity"/>
    <property type="evidence" value="ECO:0007669"/>
    <property type="project" value="UniProtKB-EC"/>
</dbReference>
<dbReference type="GO" id="GO:0006007">
    <property type="term" value="P:glucose catabolic process"/>
    <property type="evidence" value="ECO:0007669"/>
    <property type="project" value="InterPro"/>
</dbReference>
<dbReference type="GO" id="GO:0006096">
    <property type="term" value="P:glycolytic process"/>
    <property type="evidence" value="ECO:0007669"/>
    <property type="project" value="UniProtKB-UniRule"/>
</dbReference>
<dbReference type="CDD" id="cd16010">
    <property type="entry name" value="iPGM"/>
    <property type="match status" value="1"/>
</dbReference>
<dbReference type="FunFam" id="3.40.1450.10:FF:000002">
    <property type="entry name" value="2,3-bisphosphoglycerate-independent phosphoglycerate mutase"/>
    <property type="match status" value="1"/>
</dbReference>
<dbReference type="Gene3D" id="3.40.720.10">
    <property type="entry name" value="Alkaline Phosphatase, subunit A"/>
    <property type="match status" value="1"/>
</dbReference>
<dbReference type="Gene3D" id="3.40.1450.10">
    <property type="entry name" value="BPG-independent phosphoglycerate mutase, domain B"/>
    <property type="match status" value="1"/>
</dbReference>
<dbReference type="HAMAP" id="MF_01038">
    <property type="entry name" value="GpmI"/>
    <property type="match status" value="1"/>
</dbReference>
<dbReference type="InterPro" id="IPR017850">
    <property type="entry name" value="Alkaline_phosphatase_core_sf"/>
</dbReference>
<dbReference type="InterPro" id="IPR011258">
    <property type="entry name" value="BPG-indep_PGM_N"/>
</dbReference>
<dbReference type="InterPro" id="IPR006124">
    <property type="entry name" value="Metalloenzyme"/>
</dbReference>
<dbReference type="InterPro" id="IPR036646">
    <property type="entry name" value="PGAM_B_sf"/>
</dbReference>
<dbReference type="InterPro" id="IPR005995">
    <property type="entry name" value="Pgm_bpd_ind"/>
</dbReference>
<dbReference type="NCBIfam" id="TIGR01307">
    <property type="entry name" value="pgm_bpd_ind"/>
    <property type="match status" value="1"/>
</dbReference>
<dbReference type="PANTHER" id="PTHR31637">
    <property type="entry name" value="2,3-BISPHOSPHOGLYCERATE-INDEPENDENT PHOSPHOGLYCERATE MUTASE"/>
    <property type="match status" value="1"/>
</dbReference>
<dbReference type="PANTHER" id="PTHR31637:SF0">
    <property type="entry name" value="2,3-BISPHOSPHOGLYCERATE-INDEPENDENT PHOSPHOGLYCERATE MUTASE"/>
    <property type="match status" value="1"/>
</dbReference>
<dbReference type="Pfam" id="PF06415">
    <property type="entry name" value="iPGM_N"/>
    <property type="match status" value="1"/>
</dbReference>
<dbReference type="Pfam" id="PF01676">
    <property type="entry name" value="Metalloenzyme"/>
    <property type="match status" value="1"/>
</dbReference>
<dbReference type="PIRSF" id="PIRSF001492">
    <property type="entry name" value="IPGAM"/>
    <property type="match status" value="1"/>
</dbReference>
<dbReference type="SUPFAM" id="SSF64158">
    <property type="entry name" value="2,3-Bisphosphoglycerate-independent phosphoglycerate mutase, substrate-binding domain"/>
    <property type="match status" value="1"/>
</dbReference>
<dbReference type="SUPFAM" id="SSF53649">
    <property type="entry name" value="Alkaline phosphatase-like"/>
    <property type="match status" value="1"/>
</dbReference>
<accession>Q7V051</accession>
<protein>
    <recommendedName>
        <fullName evidence="1">2,3-bisphosphoglycerate-independent phosphoglycerate mutase</fullName>
        <shortName evidence="1">BPG-independent PGAM</shortName>
        <shortName evidence="1">Phosphoglyceromutase</shortName>
        <shortName evidence="1">iPGM</shortName>
        <ecNumber evidence="1">5.4.2.12</ecNumber>
    </recommendedName>
</protein>
<evidence type="ECO:0000255" key="1">
    <source>
        <dbReference type="HAMAP-Rule" id="MF_01038"/>
    </source>
</evidence>
<reference key="1">
    <citation type="journal article" date="2003" name="Nature">
        <title>Genome divergence in two Prochlorococcus ecotypes reflects oceanic niche differentiation.</title>
        <authorList>
            <person name="Rocap G."/>
            <person name="Larimer F.W."/>
            <person name="Lamerdin J.E."/>
            <person name="Malfatti S."/>
            <person name="Chain P."/>
            <person name="Ahlgren N.A."/>
            <person name="Arellano A."/>
            <person name="Coleman M."/>
            <person name="Hauser L."/>
            <person name="Hess W.R."/>
            <person name="Johnson Z.I."/>
            <person name="Land M.L."/>
            <person name="Lindell D."/>
            <person name="Post A.F."/>
            <person name="Regala W."/>
            <person name="Shah M."/>
            <person name="Shaw S.L."/>
            <person name="Steglich C."/>
            <person name="Sullivan M.B."/>
            <person name="Ting C.S."/>
            <person name="Tolonen A."/>
            <person name="Webb E.A."/>
            <person name="Zinser E.R."/>
            <person name="Chisholm S.W."/>
        </authorList>
    </citation>
    <scope>NUCLEOTIDE SEQUENCE [LARGE SCALE GENOMIC DNA]</scope>
    <source>
        <strain>CCMP1986 / NIES-2087 / MED4</strain>
    </source>
</reference>
<keyword id="KW-0324">Glycolysis</keyword>
<keyword id="KW-0413">Isomerase</keyword>
<keyword id="KW-0464">Manganese</keyword>
<keyword id="KW-0479">Metal-binding</keyword>